<name>HEM1_METAC</name>
<dbReference type="EC" id="1.2.1.70" evidence="1"/>
<dbReference type="EMBL" id="AE010299">
    <property type="protein sequence ID" value="AAM04021.1"/>
    <property type="molecule type" value="Genomic_DNA"/>
</dbReference>
<dbReference type="RefSeq" id="WP_011020626.1">
    <property type="nucleotide sequence ID" value="NC_003552.1"/>
</dbReference>
<dbReference type="SMR" id="Q8TT60"/>
<dbReference type="FunCoup" id="Q8TT60">
    <property type="interactions" value="108"/>
</dbReference>
<dbReference type="STRING" id="188937.MA_0577"/>
<dbReference type="EnsemblBacteria" id="AAM04021">
    <property type="protein sequence ID" value="AAM04021"/>
    <property type="gene ID" value="MA_0577"/>
</dbReference>
<dbReference type="GeneID" id="1472469"/>
<dbReference type="KEGG" id="mac:MA_0577"/>
<dbReference type="HOGENOM" id="CLU_035113_0_0_2"/>
<dbReference type="InParanoid" id="Q8TT60"/>
<dbReference type="OrthoDB" id="4562at2157"/>
<dbReference type="PhylomeDB" id="Q8TT60"/>
<dbReference type="UniPathway" id="UPA00251">
    <property type="reaction ID" value="UER00316"/>
</dbReference>
<dbReference type="Proteomes" id="UP000002487">
    <property type="component" value="Chromosome"/>
</dbReference>
<dbReference type="GO" id="GO:0008883">
    <property type="term" value="F:glutamyl-tRNA reductase activity"/>
    <property type="evidence" value="ECO:0000318"/>
    <property type="project" value="GO_Central"/>
</dbReference>
<dbReference type="GO" id="GO:0050661">
    <property type="term" value="F:NADP binding"/>
    <property type="evidence" value="ECO:0007669"/>
    <property type="project" value="InterPro"/>
</dbReference>
<dbReference type="GO" id="GO:0019353">
    <property type="term" value="P:protoporphyrinogen IX biosynthetic process from glutamate"/>
    <property type="evidence" value="ECO:0000318"/>
    <property type="project" value="GO_Central"/>
</dbReference>
<dbReference type="CDD" id="cd05213">
    <property type="entry name" value="NAD_bind_Glutamyl_tRNA_reduct"/>
    <property type="match status" value="1"/>
</dbReference>
<dbReference type="FunFam" id="3.30.460.30:FF:000001">
    <property type="entry name" value="Glutamyl-tRNA reductase"/>
    <property type="match status" value="1"/>
</dbReference>
<dbReference type="FunFam" id="3.40.50.720:FF:000031">
    <property type="entry name" value="Glutamyl-tRNA reductase"/>
    <property type="match status" value="1"/>
</dbReference>
<dbReference type="Gene3D" id="3.30.460.30">
    <property type="entry name" value="Glutamyl-tRNA reductase, N-terminal domain"/>
    <property type="match status" value="1"/>
</dbReference>
<dbReference type="Gene3D" id="3.40.50.720">
    <property type="entry name" value="NAD(P)-binding Rossmann-like Domain"/>
    <property type="match status" value="1"/>
</dbReference>
<dbReference type="HAMAP" id="MF_00087">
    <property type="entry name" value="Glu_tRNA_reductase"/>
    <property type="match status" value="1"/>
</dbReference>
<dbReference type="InterPro" id="IPR000343">
    <property type="entry name" value="4pyrrol_synth_GluRdtase"/>
</dbReference>
<dbReference type="InterPro" id="IPR015896">
    <property type="entry name" value="4pyrrol_synth_GluRdtase_dimer"/>
</dbReference>
<dbReference type="InterPro" id="IPR015895">
    <property type="entry name" value="4pyrrol_synth_GluRdtase_N"/>
</dbReference>
<dbReference type="InterPro" id="IPR018214">
    <property type="entry name" value="GluRdtase_CS"/>
</dbReference>
<dbReference type="InterPro" id="IPR036453">
    <property type="entry name" value="GluRdtase_dimer_dom_sf"/>
</dbReference>
<dbReference type="InterPro" id="IPR036343">
    <property type="entry name" value="GluRdtase_N_sf"/>
</dbReference>
<dbReference type="InterPro" id="IPR036291">
    <property type="entry name" value="NAD(P)-bd_dom_sf"/>
</dbReference>
<dbReference type="InterPro" id="IPR006151">
    <property type="entry name" value="Shikm_DH/Glu-tRNA_Rdtase"/>
</dbReference>
<dbReference type="NCBIfam" id="TIGR01035">
    <property type="entry name" value="hemA"/>
    <property type="match status" value="1"/>
</dbReference>
<dbReference type="PANTHER" id="PTHR43013">
    <property type="entry name" value="GLUTAMYL-TRNA REDUCTASE"/>
    <property type="match status" value="1"/>
</dbReference>
<dbReference type="PANTHER" id="PTHR43013:SF1">
    <property type="entry name" value="GLUTAMYL-TRNA REDUCTASE"/>
    <property type="match status" value="1"/>
</dbReference>
<dbReference type="Pfam" id="PF00745">
    <property type="entry name" value="GlutR_dimer"/>
    <property type="match status" value="1"/>
</dbReference>
<dbReference type="Pfam" id="PF05201">
    <property type="entry name" value="GlutR_N"/>
    <property type="match status" value="1"/>
</dbReference>
<dbReference type="Pfam" id="PF01488">
    <property type="entry name" value="Shikimate_DH"/>
    <property type="match status" value="1"/>
</dbReference>
<dbReference type="PIRSF" id="PIRSF000445">
    <property type="entry name" value="4pyrrol_synth_GluRdtase"/>
    <property type="match status" value="1"/>
</dbReference>
<dbReference type="SUPFAM" id="SSF69742">
    <property type="entry name" value="Glutamyl tRNA-reductase catalytic, N-terminal domain"/>
    <property type="match status" value="1"/>
</dbReference>
<dbReference type="SUPFAM" id="SSF69075">
    <property type="entry name" value="Glutamyl tRNA-reductase dimerization domain"/>
    <property type="match status" value="1"/>
</dbReference>
<dbReference type="SUPFAM" id="SSF51735">
    <property type="entry name" value="NAD(P)-binding Rossmann-fold domains"/>
    <property type="match status" value="1"/>
</dbReference>
<dbReference type="PROSITE" id="PS00747">
    <property type="entry name" value="GLUTR"/>
    <property type="match status" value="1"/>
</dbReference>
<organism>
    <name type="scientific">Methanosarcina acetivorans (strain ATCC 35395 / DSM 2834 / JCM 12185 / C2A)</name>
    <dbReference type="NCBI Taxonomy" id="188937"/>
    <lineage>
        <taxon>Archaea</taxon>
        <taxon>Methanobacteriati</taxon>
        <taxon>Methanobacteriota</taxon>
        <taxon>Stenosarchaea group</taxon>
        <taxon>Methanomicrobia</taxon>
        <taxon>Methanosarcinales</taxon>
        <taxon>Methanosarcinaceae</taxon>
        <taxon>Methanosarcina</taxon>
    </lineage>
</organism>
<feature type="chain" id="PRO_0000114100" description="Glutamyl-tRNA reductase">
    <location>
        <begin position="1"/>
        <end position="460"/>
    </location>
</feature>
<feature type="active site" description="Nucleophile" evidence="1">
    <location>
        <position position="49"/>
    </location>
</feature>
<feature type="binding site" evidence="1">
    <location>
        <begin position="48"/>
        <end position="51"/>
    </location>
    <ligand>
        <name>substrate</name>
    </ligand>
</feature>
<feature type="binding site" evidence="1">
    <location>
        <position position="100"/>
    </location>
    <ligand>
        <name>substrate</name>
    </ligand>
</feature>
<feature type="binding site" evidence="1">
    <location>
        <begin position="105"/>
        <end position="107"/>
    </location>
    <ligand>
        <name>substrate</name>
    </ligand>
</feature>
<feature type="binding site" evidence="1">
    <location>
        <position position="111"/>
    </location>
    <ligand>
        <name>substrate</name>
    </ligand>
</feature>
<feature type="binding site" evidence="1">
    <location>
        <begin position="180"/>
        <end position="185"/>
    </location>
    <ligand>
        <name>NADP(+)</name>
        <dbReference type="ChEBI" id="CHEBI:58349"/>
    </ligand>
</feature>
<feature type="site" description="Important for activity" evidence="1">
    <location>
        <position position="90"/>
    </location>
</feature>
<comment type="function">
    <text evidence="1">Catalyzes the NADPH-dependent reduction of glutamyl-tRNA(Glu) to glutamate 1-semialdehyde (GSA).</text>
</comment>
<comment type="catalytic activity">
    <reaction evidence="1">
        <text>(S)-4-amino-5-oxopentanoate + tRNA(Glu) + NADP(+) = L-glutamyl-tRNA(Glu) + NADPH + H(+)</text>
        <dbReference type="Rhea" id="RHEA:12344"/>
        <dbReference type="Rhea" id="RHEA-COMP:9663"/>
        <dbReference type="Rhea" id="RHEA-COMP:9680"/>
        <dbReference type="ChEBI" id="CHEBI:15378"/>
        <dbReference type="ChEBI" id="CHEBI:57501"/>
        <dbReference type="ChEBI" id="CHEBI:57783"/>
        <dbReference type="ChEBI" id="CHEBI:58349"/>
        <dbReference type="ChEBI" id="CHEBI:78442"/>
        <dbReference type="ChEBI" id="CHEBI:78520"/>
        <dbReference type="EC" id="1.2.1.70"/>
    </reaction>
</comment>
<comment type="pathway">
    <text evidence="1">Porphyrin-containing compound metabolism; protoporphyrin-IX biosynthesis; 5-aminolevulinate from L-glutamyl-tRNA(Glu): step 1/2.</text>
</comment>
<comment type="subunit">
    <text evidence="1">Homodimer.</text>
</comment>
<comment type="domain">
    <text evidence="1">Possesses an unusual extended V-shaped dimeric structure with each monomer consisting of three distinct domains arranged along a curved 'spinal' alpha-helix. The N-terminal catalytic domain specifically recognizes the glutamate moiety of the substrate. The second domain is the NADPH-binding domain, and the third C-terminal domain is responsible for dimerization.</text>
</comment>
<comment type="miscellaneous">
    <text evidence="1">During catalysis, the active site Cys acts as a nucleophile attacking the alpha-carbonyl group of tRNA-bound glutamate with the formation of a thioester intermediate between enzyme and glutamate, and the concomitant release of tRNA(Glu). The thioester intermediate is finally reduced by direct hydride transfer from NADPH, to form the product GSA.</text>
</comment>
<comment type="similarity">
    <text evidence="1">Belongs to the glutamyl-tRNA reductase family.</text>
</comment>
<reference key="1">
    <citation type="journal article" date="2002" name="Genome Res.">
        <title>The genome of Methanosarcina acetivorans reveals extensive metabolic and physiological diversity.</title>
        <authorList>
            <person name="Galagan J.E."/>
            <person name="Nusbaum C."/>
            <person name="Roy A."/>
            <person name="Endrizzi M.G."/>
            <person name="Macdonald P."/>
            <person name="FitzHugh W."/>
            <person name="Calvo S."/>
            <person name="Engels R."/>
            <person name="Smirnov S."/>
            <person name="Atnoor D."/>
            <person name="Brown A."/>
            <person name="Allen N."/>
            <person name="Naylor J."/>
            <person name="Stange-Thomann N."/>
            <person name="DeArellano K."/>
            <person name="Johnson R."/>
            <person name="Linton L."/>
            <person name="McEwan P."/>
            <person name="McKernan K."/>
            <person name="Talamas J."/>
            <person name="Tirrell A."/>
            <person name="Ye W."/>
            <person name="Zimmer A."/>
            <person name="Barber R.D."/>
            <person name="Cann I."/>
            <person name="Graham D.E."/>
            <person name="Grahame D.A."/>
            <person name="Guss A.M."/>
            <person name="Hedderich R."/>
            <person name="Ingram-Smith C."/>
            <person name="Kuettner H.C."/>
            <person name="Krzycki J.A."/>
            <person name="Leigh J.A."/>
            <person name="Li W."/>
            <person name="Liu J."/>
            <person name="Mukhopadhyay B."/>
            <person name="Reeve J.N."/>
            <person name="Smith K."/>
            <person name="Springer T.A."/>
            <person name="Umayam L.A."/>
            <person name="White O."/>
            <person name="White R.H."/>
            <person name="de Macario E.C."/>
            <person name="Ferry J.G."/>
            <person name="Jarrell K.F."/>
            <person name="Jing H."/>
            <person name="Macario A.J.L."/>
            <person name="Paulsen I.T."/>
            <person name="Pritchett M."/>
            <person name="Sowers K.R."/>
            <person name="Swanson R.V."/>
            <person name="Zinder S.H."/>
            <person name="Lander E."/>
            <person name="Metcalf W.W."/>
            <person name="Birren B."/>
        </authorList>
    </citation>
    <scope>NUCLEOTIDE SEQUENCE [LARGE SCALE GENOMIC DNA]</scope>
    <source>
        <strain>ATCC 35395 / DSM 2834 / JCM 12185 / C2A</strain>
    </source>
</reference>
<evidence type="ECO:0000255" key="1">
    <source>
        <dbReference type="HAMAP-Rule" id="MF_00087"/>
    </source>
</evidence>
<accession>Q8TT60</accession>
<proteinExistence type="inferred from homology"/>
<sequence>MTEISSMVISHKKAKIEEMESAWHGDLDGLLNNLYHHEYVYECVVLKTCNRVEIYVVSPKSSSVLFSFAKEMGASTHIIDFYGHDESLEHLLRLAGGLESMIVGEDQILGQIKDLYAYSKKAGTTGKILDTAFEKAIQVGKRIRNETRINKGSVSIGSAAVDLAEDIFGGLTGKSVLVIGAGEIGVLVAKALAEKDIEAIYIANRTFKKAEEIAYELGGYAVRLDDIRGHLPDADVVISGTGAPHYILTREMIEEALDGRERKLLLIDIANPRDIEESVAELENVELCNIDNLRVISERTLKMRKEEAKKAEAIIQEEIRLLNIQYKRQKADRLISELYRQVYDVRVREREKAVNRLSAYHTIGEIETEVLDDLTHSIVNKILAEPTKVLRQAAELGNEEFLDVVSRVFCLEKDKAKLEKINQAKFEQIEPGCAKEQAAVKEQTAVKEQAVVKEQAAVKD</sequence>
<gene>
    <name evidence="1" type="primary">hemA</name>
    <name type="ordered locus">MA_0577</name>
</gene>
<keyword id="KW-0521">NADP</keyword>
<keyword id="KW-0560">Oxidoreductase</keyword>
<keyword id="KW-0627">Porphyrin biosynthesis</keyword>
<keyword id="KW-1185">Reference proteome</keyword>
<protein>
    <recommendedName>
        <fullName evidence="1">Glutamyl-tRNA reductase</fullName>
        <shortName evidence="1">GluTR</shortName>
        <ecNumber evidence="1">1.2.1.70</ecNumber>
    </recommendedName>
</protein>